<gene>
    <name evidence="1" type="primary">murG</name>
    <name type="ordered locus">NMB0422</name>
</gene>
<organism>
    <name type="scientific">Neisseria meningitidis serogroup B (strain ATCC BAA-335 / MC58)</name>
    <dbReference type="NCBI Taxonomy" id="122586"/>
    <lineage>
        <taxon>Bacteria</taxon>
        <taxon>Pseudomonadati</taxon>
        <taxon>Pseudomonadota</taxon>
        <taxon>Betaproteobacteria</taxon>
        <taxon>Neisseriales</taxon>
        <taxon>Neisseriaceae</taxon>
        <taxon>Neisseria</taxon>
    </lineage>
</organism>
<sequence length="355" mass="38021">MGGKTFMLMAGGTGGHIFPALAVADSLRARGHHVIWLGSKDSMEERIVPQYGIRLETLAIKGVRGNGIKRKLMLPVTLYQTVREAQRIIRKHRVECVIGFGGFVTFPGGLAAKLLGVPIVIHEQNAVAGLSNRHLSRWAKRVLYAFPKAFSHEGGLVGNPVRADISNLPVPAERFQGREGRLKILVVGGSLGADVLNKTVPQALALLPDNARPQMYHQSGRGKLGSLQADYDALGVKAECVEFITDMVSAYRDADLVICRAGALTIAELTAAGLGALLVPYPHAVDDHQTANARFMVQAEAGLLLPQTQLTAEKLAEILGGLNREKCLKWAENARTLALPHSADDVAEAAIACAA</sequence>
<feature type="chain" id="PRO_0000109191" description="UDP-N-acetylglucosamine--N-acetylmuramyl-(pentapeptide) pyrophosphoryl-undecaprenol N-acetylglucosamine transferase">
    <location>
        <begin position="1"/>
        <end position="355"/>
    </location>
</feature>
<feature type="binding site" evidence="1">
    <location>
        <begin position="13"/>
        <end position="15"/>
    </location>
    <ligand>
        <name>UDP-N-acetyl-alpha-D-glucosamine</name>
        <dbReference type="ChEBI" id="CHEBI:57705"/>
    </ligand>
</feature>
<feature type="binding site" evidence="1">
    <location>
        <position position="125"/>
    </location>
    <ligand>
        <name>UDP-N-acetyl-alpha-D-glucosamine</name>
        <dbReference type="ChEBI" id="CHEBI:57705"/>
    </ligand>
</feature>
<feature type="binding site" evidence="1">
    <location>
        <position position="162"/>
    </location>
    <ligand>
        <name>UDP-N-acetyl-alpha-D-glucosamine</name>
        <dbReference type="ChEBI" id="CHEBI:57705"/>
    </ligand>
</feature>
<feature type="binding site" evidence="1">
    <location>
        <position position="190"/>
    </location>
    <ligand>
        <name>UDP-N-acetyl-alpha-D-glucosamine</name>
        <dbReference type="ChEBI" id="CHEBI:57705"/>
    </ligand>
</feature>
<feature type="binding site" evidence="1">
    <location>
        <position position="244"/>
    </location>
    <ligand>
        <name>UDP-N-acetyl-alpha-D-glucosamine</name>
        <dbReference type="ChEBI" id="CHEBI:57705"/>
    </ligand>
</feature>
<feature type="binding site" evidence="1">
    <location>
        <position position="289"/>
    </location>
    <ligand>
        <name>UDP-N-acetyl-alpha-D-glucosamine</name>
        <dbReference type="ChEBI" id="CHEBI:57705"/>
    </ligand>
</feature>
<protein>
    <recommendedName>
        <fullName evidence="1">UDP-N-acetylglucosamine--N-acetylmuramyl-(pentapeptide) pyrophosphoryl-undecaprenol N-acetylglucosamine transferase</fullName>
        <ecNumber evidence="1">2.4.1.227</ecNumber>
    </recommendedName>
    <alternativeName>
        <fullName evidence="1">Undecaprenyl-PP-MurNAc-pentapeptide-UDPGlcNAc GlcNAc transferase</fullName>
    </alternativeName>
</protein>
<proteinExistence type="inferred from homology"/>
<name>MURG_NEIMB</name>
<keyword id="KW-0131">Cell cycle</keyword>
<keyword id="KW-0132">Cell division</keyword>
<keyword id="KW-0997">Cell inner membrane</keyword>
<keyword id="KW-1003">Cell membrane</keyword>
<keyword id="KW-0133">Cell shape</keyword>
<keyword id="KW-0961">Cell wall biogenesis/degradation</keyword>
<keyword id="KW-0328">Glycosyltransferase</keyword>
<keyword id="KW-0472">Membrane</keyword>
<keyword id="KW-0573">Peptidoglycan synthesis</keyword>
<keyword id="KW-1185">Reference proteome</keyword>
<keyword id="KW-0808">Transferase</keyword>
<dbReference type="EC" id="2.4.1.227" evidence="1"/>
<dbReference type="EMBL" id="AE002098">
    <property type="protein sequence ID" value="AAF40860.1"/>
    <property type="molecule type" value="Genomic_DNA"/>
</dbReference>
<dbReference type="PIR" id="A81201">
    <property type="entry name" value="A81201"/>
</dbReference>
<dbReference type="RefSeq" id="NP_273470.1">
    <property type="nucleotide sequence ID" value="NC_003112.2"/>
</dbReference>
<dbReference type="RefSeq" id="WP_002224927.1">
    <property type="nucleotide sequence ID" value="NC_003112.2"/>
</dbReference>
<dbReference type="SMR" id="Q9K0Y2"/>
<dbReference type="FunCoup" id="Q9K0Y2">
    <property type="interactions" value="272"/>
</dbReference>
<dbReference type="STRING" id="122586.NMB0422"/>
<dbReference type="CAZy" id="GT28">
    <property type="family name" value="Glycosyltransferase Family 28"/>
</dbReference>
<dbReference type="PaxDb" id="122586-NMB0422"/>
<dbReference type="KEGG" id="nme:NMB0422"/>
<dbReference type="PATRIC" id="fig|122586.8.peg.535"/>
<dbReference type="HOGENOM" id="CLU_037404_2_0_4"/>
<dbReference type="InParanoid" id="Q9K0Y2"/>
<dbReference type="OrthoDB" id="9808936at2"/>
<dbReference type="UniPathway" id="UPA00219"/>
<dbReference type="Proteomes" id="UP000000425">
    <property type="component" value="Chromosome"/>
</dbReference>
<dbReference type="GO" id="GO:0005886">
    <property type="term" value="C:plasma membrane"/>
    <property type="evidence" value="ECO:0007669"/>
    <property type="project" value="UniProtKB-SubCell"/>
</dbReference>
<dbReference type="GO" id="GO:0051991">
    <property type="term" value="F:UDP-N-acetyl-D-glucosamine:N-acetylmuramoyl-L-alanyl-D-glutamyl-meso-2,6-diaminopimelyl-D-alanyl-D-alanine-diphosphoundecaprenol 4-beta-N-acetylglucosaminlytransferase activity"/>
    <property type="evidence" value="ECO:0007669"/>
    <property type="project" value="RHEA"/>
</dbReference>
<dbReference type="GO" id="GO:0050511">
    <property type="term" value="F:undecaprenyldiphospho-muramoylpentapeptide beta-N-acetylglucosaminyltransferase activity"/>
    <property type="evidence" value="ECO:0000318"/>
    <property type="project" value="GO_Central"/>
</dbReference>
<dbReference type="GO" id="GO:0005975">
    <property type="term" value="P:carbohydrate metabolic process"/>
    <property type="evidence" value="ECO:0007669"/>
    <property type="project" value="InterPro"/>
</dbReference>
<dbReference type="GO" id="GO:0051301">
    <property type="term" value="P:cell division"/>
    <property type="evidence" value="ECO:0007669"/>
    <property type="project" value="UniProtKB-KW"/>
</dbReference>
<dbReference type="GO" id="GO:0071555">
    <property type="term" value="P:cell wall organization"/>
    <property type="evidence" value="ECO:0007669"/>
    <property type="project" value="UniProtKB-KW"/>
</dbReference>
<dbReference type="GO" id="GO:0030259">
    <property type="term" value="P:lipid glycosylation"/>
    <property type="evidence" value="ECO:0007669"/>
    <property type="project" value="UniProtKB-UniRule"/>
</dbReference>
<dbReference type="GO" id="GO:0009252">
    <property type="term" value="P:peptidoglycan biosynthetic process"/>
    <property type="evidence" value="ECO:0007669"/>
    <property type="project" value="UniProtKB-UniRule"/>
</dbReference>
<dbReference type="GO" id="GO:0008360">
    <property type="term" value="P:regulation of cell shape"/>
    <property type="evidence" value="ECO:0007669"/>
    <property type="project" value="UniProtKB-KW"/>
</dbReference>
<dbReference type="CDD" id="cd03785">
    <property type="entry name" value="GT28_MurG"/>
    <property type="match status" value="1"/>
</dbReference>
<dbReference type="Gene3D" id="3.40.50.2000">
    <property type="entry name" value="Glycogen Phosphorylase B"/>
    <property type="match status" value="2"/>
</dbReference>
<dbReference type="HAMAP" id="MF_00033">
    <property type="entry name" value="MurG"/>
    <property type="match status" value="1"/>
</dbReference>
<dbReference type="InterPro" id="IPR006009">
    <property type="entry name" value="GlcNAc_MurG"/>
</dbReference>
<dbReference type="InterPro" id="IPR007235">
    <property type="entry name" value="Glyco_trans_28_C"/>
</dbReference>
<dbReference type="InterPro" id="IPR004276">
    <property type="entry name" value="GlycoTrans_28_N"/>
</dbReference>
<dbReference type="NCBIfam" id="TIGR01133">
    <property type="entry name" value="murG"/>
    <property type="match status" value="1"/>
</dbReference>
<dbReference type="PANTHER" id="PTHR21015:SF22">
    <property type="entry name" value="GLYCOSYLTRANSFERASE"/>
    <property type="match status" value="1"/>
</dbReference>
<dbReference type="PANTHER" id="PTHR21015">
    <property type="entry name" value="UDP-N-ACETYLGLUCOSAMINE--N-ACETYLMURAMYL-(PENTAPEPTIDE) PYROPHOSPHORYL-UNDECAPRENOL N-ACETYLGLUCOSAMINE TRANSFERASE 1"/>
    <property type="match status" value="1"/>
</dbReference>
<dbReference type="Pfam" id="PF04101">
    <property type="entry name" value="Glyco_tran_28_C"/>
    <property type="match status" value="1"/>
</dbReference>
<dbReference type="Pfam" id="PF03033">
    <property type="entry name" value="Glyco_transf_28"/>
    <property type="match status" value="1"/>
</dbReference>
<dbReference type="SUPFAM" id="SSF53756">
    <property type="entry name" value="UDP-Glycosyltransferase/glycogen phosphorylase"/>
    <property type="match status" value="1"/>
</dbReference>
<reference key="1">
    <citation type="journal article" date="2000" name="Science">
        <title>Complete genome sequence of Neisseria meningitidis serogroup B strain MC58.</title>
        <authorList>
            <person name="Tettelin H."/>
            <person name="Saunders N.J."/>
            <person name="Heidelberg J.F."/>
            <person name="Jeffries A.C."/>
            <person name="Nelson K.E."/>
            <person name="Eisen J.A."/>
            <person name="Ketchum K.A."/>
            <person name="Hood D.W."/>
            <person name="Peden J.F."/>
            <person name="Dodson R.J."/>
            <person name="Nelson W.C."/>
            <person name="Gwinn M.L."/>
            <person name="DeBoy R.T."/>
            <person name="Peterson J.D."/>
            <person name="Hickey E.K."/>
            <person name="Haft D.H."/>
            <person name="Salzberg S.L."/>
            <person name="White O."/>
            <person name="Fleischmann R.D."/>
            <person name="Dougherty B.A."/>
            <person name="Mason T.M."/>
            <person name="Ciecko A."/>
            <person name="Parksey D.S."/>
            <person name="Blair E."/>
            <person name="Cittone H."/>
            <person name="Clark E.B."/>
            <person name="Cotton M.D."/>
            <person name="Utterback T.R."/>
            <person name="Khouri H.M."/>
            <person name="Qin H."/>
            <person name="Vamathevan J.J."/>
            <person name="Gill J."/>
            <person name="Scarlato V."/>
            <person name="Masignani V."/>
            <person name="Pizza M."/>
            <person name="Grandi G."/>
            <person name="Sun L."/>
            <person name="Smith H.O."/>
            <person name="Fraser C.M."/>
            <person name="Moxon E.R."/>
            <person name="Rappuoli R."/>
            <person name="Venter J.C."/>
        </authorList>
    </citation>
    <scope>NUCLEOTIDE SEQUENCE [LARGE SCALE GENOMIC DNA]</scope>
    <source>
        <strain>ATCC BAA-335 / MC58</strain>
    </source>
</reference>
<accession>Q9K0Y2</accession>
<evidence type="ECO:0000255" key="1">
    <source>
        <dbReference type="HAMAP-Rule" id="MF_00033"/>
    </source>
</evidence>
<comment type="function">
    <text evidence="1">Cell wall formation. Catalyzes the transfer of a GlcNAc subunit on undecaprenyl-pyrophosphoryl-MurNAc-pentapeptide (lipid intermediate I) to form undecaprenyl-pyrophosphoryl-MurNAc-(pentapeptide)GlcNAc (lipid intermediate II).</text>
</comment>
<comment type="catalytic activity">
    <reaction evidence="1">
        <text>di-trans,octa-cis-undecaprenyl diphospho-N-acetyl-alpha-D-muramoyl-L-alanyl-D-glutamyl-meso-2,6-diaminopimeloyl-D-alanyl-D-alanine + UDP-N-acetyl-alpha-D-glucosamine = di-trans,octa-cis-undecaprenyl diphospho-[N-acetyl-alpha-D-glucosaminyl-(1-&gt;4)]-N-acetyl-alpha-D-muramoyl-L-alanyl-D-glutamyl-meso-2,6-diaminopimeloyl-D-alanyl-D-alanine + UDP + H(+)</text>
        <dbReference type="Rhea" id="RHEA:31227"/>
        <dbReference type="ChEBI" id="CHEBI:15378"/>
        <dbReference type="ChEBI" id="CHEBI:57705"/>
        <dbReference type="ChEBI" id="CHEBI:58223"/>
        <dbReference type="ChEBI" id="CHEBI:61387"/>
        <dbReference type="ChEBI" id="CHEBI:61388"/>
        <dbReference type="EC" id="2.4.1.227"/>
    </reaction>
</comment>
<comment type="pathway">
    <text evidence="1">Cell wall biogenesis; peptidoglycan biosynthesis.</text>
</comment>
<comment type="subcellular location">
    <subcellularLocation>
        <location evidence="1">Cell inner membrane</location>
        <topology evidence="1">Peripheral membrane protein</topology>
        <orientation evidence="1">Cytoplasmic side</orientation>
    </subcellularLocation>
</comment>
<comment type="similarity">
    <text evidence="1">Belongs to the glycosyltransferase 28 family. MurG subfamily.</text>
</comment>